<protein>
    <recommendedName>
        <fullName evidence="1">Na(+)/H(+) antiporter NhaB</fullName>
    </recommendedName>
    <alternativeName>
        <fullName evidence="1">Sodium/proton antiporter NhaB</fullName>
    </alternativeName>
</protein>
<proteinExistence type="inferred from homology"/>
<comment type="function">
    <text evidence="1">Na(+)/H(+) antiporter that extrudes sodium in exchange for external protons.</text>
</comment>
<comment type="catalytic activity">
    <reaction evidence="1">
        <text>2 Na(+)(in) + 3 H(+)(out) = 2 Na(+)(out) + 3 H(+)(in)</text>
        <dbReference type="Rhea" id="RHEA:29247"/>
        <dbReference type="ChEBI" id="CHEBI:15378"/>
        <dbReference type="ChEBI" id="CHEBI:29101"/>
    </reaction>
    <physiologicalReaction direction="left-to-right" evidence="1">
        <dbReference type="Rhea" id="RHEA:29248"/>
    </physiologicalReaction>
</comment>
<comment type="subcellular location">
    <subcellularLocation>
        <location evidence="1">Cell inner membrane</location>
        <topology evidence="1">Multi-pass membrane protein</topology>
    </subcellularLocation>
</comment>
<comment type="similarity">
    <text evidence="1">Belongs to the NhaB Na(+)/H(+) (TC 2.A.34) antiporter family.</text>
</comment>
<keyword id="KW-0050">Antiport</keyword>
<keyword id="KW-0997">Cell inner membrane</keyword>
<keyword id="KW-1003">Cell membrane</keyword>
<keyword id="KW-0406">Ion transport</keyword>
<keyword id="KW-0472">Membrane</keyword>
<keyword id="KW-1185">Reference proteome</keyword>
<keyword id="KW-0915">Sodium</keyword>
<keyword id="KW-0739">Sodium transport</keyword>
<keyword id="KW-0812">Transmembrane</keyword>
<keyword id="KW-1133">Transmembrane helix</keyword>
<keyword id="KW-0813">Transport</keyword>
<evidence type="ECO:0000255" key="1">
    <source>
        <dbReference type="HAMAP-Rule" id="MF_01599"/>
    </source>
</evidence>
<feature type="chain" id="PRO_0000333115" description="Na(+)/H(+) antiporter NhaB">
    <location>
        <begin position="1"/>
        <end position="499"/>
    </location>
</feature>
<feature type="transmembrane region" description="Helical" evidence="1">
    <location>
        <begin position="38"/>
        <end position="58"/>
    </location>
</feature>
<feature type="transmembrane region" description="Helical" evidence="1">
    <location>
        <begin position="62"/>
        <end position="82"/>
    </location>
</feature>
<feature type="transmembrane region" description="Helical" evidence="1">
    <location>
        <begin position="89"/>
        <end position="109"/>
    </location>
</feature>
<feature type="transmembrane region" description="Helical" evidence="1">
    <location>
        <begin position="128"/>
        <end position="148"/>
    </location>
</feature>
<feature type="transmembrane region" description="Helical" evidence="1">
    <location>
        <begin position="149"/>
        <end position="169"/>
    </location>
</feature>
<feature type="transmembrane region" description="Helical" evidence="1">
    <location>
        <begin position="204"/>
        <end position="224"/>
    </location>
</feature>
<feature type="transmembrane region" description="Helical" evidence="1">
    <location>
        <begin position="242"/>
        <end position="262"/>
    </location>
</feature>
<feature type="transmembrane region" description="Helical" evidence="1">
    <location>
        <begin position="310"/>
        <end position="330"/>
    </location>
</feature>
<feature type="transmembrane region" description="Helical" evidence="1">
    <location>
        <begin position="349"/>
        <end position="369"/>
    </location>
</feature>
<feature type="transmembrane region" description="Helical" evidence="1">
    <location>
        <begin position="393"/>
        <end position="413"/>
    </location>
</feature>
<feature type="transmembrane region" description="Helical" evidence="1">
    <location>
        <begin position="449"/>
        <end position="469"/>
    </location>
</feature>
<feature type="transmembrane region" description="Helical" evidence="1">
    <location>
        <begin position="478"/>
        <end position="498"/>
    </location>
</feature>
<accession>Q21J49</accession>
<gene>
    <name evidence="1" type="primary">nhaB</name>
    <name type="ordered locus">Sde_2020</name>
</gene>
<organism>
    <name type="scientific">Saccharophagus degradans (strain 2-40 / ATCC 43961 / DSM 17024)</name>
    <dbReference type="NCBI Taxonomy" id="203122"/>
    <lineage>
        <taxon>Bacteria</taxon>
        <taxon>Pseudomonadati</taxon>
        <taxon>Pseudomonadota</taxon>
        <taxon>Gammaproteobacteria</taxon>
        <taxon>Cellvibrionales</taxon>
        <taxon>Cellvibrionaceae</taxon>
        <taxon>Saccharophagus</taxon>
    </lineage>
</organism>
<dbReference type="EMBL" id="CP000282">
    <property type="protein sequence ID" value="ABD81280.1"/>
    <property type="molecule type" value="Genomic_DNA"/>
</dbReference>
<dbReference type="RefSeq" id="WP_011468498.1">
    <property type="nucleotide sequence ID" value="NC_007912.1"/>
</dbReference>
<dbReference type="SMR" id="Q21J49"/>
<dbReference type="GeneID" id="98613692"/>
<dbReference type="KEGG" id="sde:Sde_2020"/>
<dbReference type="eggNOG" id="COG3067">
    <property type="taxonomic scope" value="Bacteria"/>
</dbReference>
<dbReference type="HOGENOM" id="CLU_041110_0_0_6"/>
<dbReference type="OrthoDB" id="5288732at2"/>
<dbReference type="Proteomes" id="UP000001947">
    <property type="component" value="Chromosome"/>
</dbReference>
<dbReference type="GO" id="GO:0005886">
    <property type="term" value="C:plasma membrane"/>
    <property type="evidence" value="ECO:0007669"/>
    <property type="project" value="UniProtKB-SubCell"/>
</dbReference>
<dbReference type="GO" id="GO:0015385">
    <property type="term" value="F:sodium:proton antiporter activity"/>
    <property type="evidence" value="ECO:0007669"/>
    <property type="project" value="InterPro"/>
</dbReference>
<dbReference type="HAMAP" id="MF_01599">
    <property type="entry name" value="NhaB"/>
    <property type="match status" value="1"/>
</dbReference>
<dbReference type="InterPro" id="IPR004671">
    <property type="entry name" value="Na+/H+_antiporter_NhaB"/>
</dbReference>
<dbReference type="NCBIfam" id="NF007093">
    <property type="entry name" value="PRK09547.1"/>
    <property type="match status" value="1"/>
</dbReference>
<dbReference type="PANTHER" id="PTHR43302:SF1">
    <property type="entry name" value="NA(+)_H(+) ANTIPORTER NHAB"/>
    <property type="match status" value="1"/>
</dbReference>
<dbReference type="PANTHER" id="PTHR43302">
    <property type="entry name" value="TRANSPORTER ARSB-RELATED"/>
    <property type="match status" value="1"/>
</dbReference>
<dbReference type="Pfam" id="PF06450">
    <property type="entry name" value="NhaB"/>
    <property type="match status" value="1"/>
</dbReference>
<reference key="1">
    <citation type="journal article" date="2008" name="PLoS Genet.">
        <title>Complete genome sequence of the complex carbohydrate-degrading marine bacterium, Saccharophagus degradans strain 2-40 T.</title>
        <authorList>
            <person name="Weiner R.M."/>
            <person name="Taylor L.E. II"/>
            <person name="Henrissat B."/>
            <person name="Hauser L."/>
            <person name="Land M."/>
            <person name="Coutinho P.M."/>
            <person name="Rancurel C."/>
            <person name="Saunders E.H."/>
            <person name="Longmire A.G."/>
            <person name="Zhang H."/>
            <person name="Bayer E.A."/>
            <person name="Gilbert H.J."/>
            <person name="Larimer F."/>
            <person name="Zhulin I.B."/>
            <person name="Ekborg N.A."/>
            <person name="Lamed R."/>
            <person name="Richardson P.M."/>
            <person name="Borovok I."/>
            <person name="Hutcheson S."/>
        </authorList>
    </citation>
    <scope>NUCLEOTIDE SEQUENCE [LARGE SCALE GENOMIC DNA]</scope>
    <source>
        <strain>2-40 / ATCC 43961 / DSM 17024</strain>
    </source>
</reference>
<name>NHAB_SACD2</name>
<sequence>MPQSMTNAFWHNFLGHTPNWYKKTILGFLVINIVLSQVSPFLAGWALIIEFIFTLAMALKCYPLQPGGLLAIQAVLLGLTSADSVYHEVLANFKVILLLMFMVAGIYFMKDMLLFVFTKILLGIRSKLLLSLLFSFVAAVLSAFLDALTVTAVLIAVAVGFYAVYHRFASGSGHGNDHDHSADDNVHDLHREDLDTFRSFLRSLIMHGAVGTALGGVATLVGEPQNLLIAEIAGWNFIEFYLVMAPISVPALIGGLLTCAILEKTGICGYGAKLPDSVRQILVDFDKKETAKRGFGDKAQLLVQAVVAVVLVFALALHLAEVGLIGLLIIVLLTAFNGITDEHRIGHAFEEALPFTALLVVFFAVVAVIHDQHLFTPVIDYVLAMEQGAQAPMFFVANGVLSMISDNVFVATVYINEVKAAFDAGTISREHFDVLAVAINAGTNLPSVATPNGQAAFLFLLTSALAPLIRLSYGKMVIMALPYTIVLGAVGLGSVILFY</sequence>